<organism>
    <name type="scientific">Escherichia coli (strain K12 / DH10B)</name>
    <dbReference type="NCBI Taxonomy" id="316385"/>
    <lineage>
        <taxon>Bacteria</taxon>
        <taxon>Pseudomonadati</taxon>
        <taxon>Pseudomonadota</taxon>
        <taxon>Gammaproteobacteria</taxon>
        <taxon>Enterobacterales</taxon>
        <taxon>Enterobacteriaceae</taxon>
        <taxon>Escherichia</taxon>
    </lineage>
</organism>
<keyword id="KW-0963">Cytoplasm</keyword>
<keyword id="KW-0444">Lipid biosynthesis</keyword>
<keyword id="KW-0443">Lipid metabolism</keyword>
<keyword id="KW-0520">NAD</keyword>
<keyword id="KW-0521">NADP</keyword>
<keyword id="KW-0547">Nucleotide-binding</keyword>
<keyword id="KW-0560">Oxidoreductase</keyword>
<keyword id="KW-0594">Phospholipid biosynthesis</keyword>
<keyword id="KW-1208">Phospholipid metabolism</keyword>
<proteinExistence type="inferred from homology"/>
<accession>B1X942</accession>
<sequence>MNQRNASMTVIGAGSYGTALAITLARNGHEVVLWGHDPEHIATLERDRCNAAFLPDVPFPDTLHLESDLATALAASRNILVVVPSHVFGEVLRQIKPLMRPDARLVWATKGLEAETGRLLQDVAREALGDQIPLAVISGPTFAKELAAGLPTAISLASTDQTFADDLQQLLHCGKSFRVYSNPDFIGVQLGGAVKNVIAIGAGMSDGIGFGANARTALITRGLAEMSRLGAALGADPATFMGMAGLGDLVLTCTDNQSRNRRFGMMLGQGMDVQSAQEKIGQVVEGYRNTKEVRELAHRFGVEMPITEEIYQVLYCGKNAREAALTLLGRARKDERSSH</sequence>
<gene>
    <name evidence="1" type="primary">gpsA</name>
    <name type="ordered locus">ECDH10B_3790</name>
</gene>
<dbReference type="EC" id="1.1.1.94" evidence="1"/>
<dbReference type="EMBL" id="CP000948">
    <property type="protein sequence ID" value="ACB04658.1"/>
    <property type="molecule type" value="Genomic_DNA"/>
</dbReference>
<dbReference type="RefSeq" id="WP_001076194.1">
    <property type="nucleotide sequence ID" value="NC_010473.1"/>
</dbReference>
<dbReference type="SMR" id="B1X942"/>
<dbReference type="GeneID" id="93778322"/>
<dbReference type="KEGG" id="ecd:ECDH10B_3790"/>
<dbReference type="HOGENOM" id="CLU_033449_0_2_6"/>
<dbReference type="UniPathway" id="UPA00940"/>
<dbReference type="GO" id="GO:0005829">
    <property type="term" value="C:cytosol"/>
    <property type="evidence" value="ECO:0007669"/>
    <property type="project" value="TreeGrafter"/>
</dbReference>
<dbReference type="GO" id="GO:0047952">
    <property type="term" value="F:glycerol-3-phosphate dehydrogenase [NAD(P)+] activity"/>
    <property type="evidence" value="ECO:0007669"/>
    <property type="project" value="UniProtKB-UniRule"/>
</dbReference>
<dbReference type="GO" id="GO:0051287">
    <property type="term" value="F:NAD binding"/>
    <property type="evidence" value="ECO:0007669"/>
    <property type="project" value="InterPro"/>
</dbReference>
<dbReference type="GO" id="GO:0005975">
    <property type="term" value="P:carbohydrate metabolic process"/>
    <property type="evidence" value="ECO:0007669"/>
    <property type="project" value="InterPro"/>
</dbReference>
<dbReference type="GO" id="GO:0046167">
    <property type="term" value="P:glycerol-3-phosphate biosynthetic process"/>
    <property type="evidence" value="ECO:0007669"/>
    <property type="project" value="UniProtKB-UniRule"/>
</dbReference>
<dbReference type="GO" id="GO:0046168">
    <property type="term" value="P:glycerol-3-phosphate catabolic process"/>
    <property type="evidence" value="ECO:0007669"/>
    <property type="project" value="InterPro"/>
</dbReference>
<dbReference type="GO" id="GO:0046474">
    <property type="term" value="P:glycerophospholipid biosynthetic process"/>
    <property type="evidence" value="ECO:0007669"/>
    <property type="project" value="TreeGrafter"/>
</dbReference>
<dbReference type="FunFam" id="1.10.1040.10:FF:000001">
    <property type="entry name" value="Glycerol-3-phosphate dehydrogenase [NAD(P)+]"/>
    <property type="match status" value="1"/>
</dbReference>
<dbReference type="FunFam" id="3.40.50.720:FF:000019">
    <property type="entry name" value="Glycerol-3-phosphate dehydrogenase [NAD(P)+]"/>
    <property type="match status" value="1"/>
</dbReference>
<dbReference type="Gene3D" id="1.10.1040.10">
    <property type="entry name" value="N-(1-d-carboxylethyl)-l-norvaline Dehydrogenase, domain 2"/>
    <property type="match status" value="1"/>
</dbReference>
<dbReference type="Gene3D" id="3.40.50.720">
    <property type="entry name" value="NAD(P)-binding Rossmann-like Domain"/>
    <property type="match status" value="1"/>
</dbReference>
<dbReference type="HAMAP" id="MF_00394">
    <property type="entry name" value="NAD_Glyc3P_dehydrog"/>
    <property type="match status" value="1"/>
</dbReference>
<dbReference type="InterPro" id="IPR008927">
    <property type="entry name" value="6-PGluconate_DH-like_C_sf"/>
</dbReference>
<dbReference type="InterPro" id="IPR013328">
    <property type="entry name" value="6PGD_dom2"/>
</dbReference>
<dbReference type="InterPro" id="IPR006168">
    <property type="entry name" value="G3P_DH_NAD-dep"/>
</dbReference>
<dbReference type="InterPro" id="IPR006109">
    <property type="entry name" value="G3P_DH_NAD-dep_C"/>
</dbReference>
<dbReference type="InterPro" id="IPR011128">
    <property type="entry name" value="G3P_DH_NAD-dep_N"/>
</dbReference>
<dbReference type="InterPro" id="IPR036291">
    <property type="entry name" value="NAD(P)-bd_dom_sf"/>
</dbReference>
<dbReference type="NCBIfam" id="NF000939">
    <property type="entry name" value="PRK00094.1-1"/>
    <property type="match status" value="1"/>
</dbReference>
<dbReference type="NCBIfam" id="NF000940">
    <property type="entry name" value="PRK00094.1-2"/>
    <property type="match status" value="1"/>
</dbReference>
<dbReference type="NCBIfam" id="NF000942">
    <property type="entry name" value="PRK00094.1-4"/>
    <property type="match status" value="1"/>
</dbReference>
<dbReference type="PANTHER" id="PTHR11728">
    <property type="entry name" value="GLYCEROL-3-PHOSPHATE DEHYDROGENASE"/>
    <property type="match status" value="1"/>
</dbReference>
<dbReference type="PANTHER" id="PTHR11728:SF1">
    <property type="entry name" value="GLYCEROL-3-PHOSPHATE DEHYDROGENASE [NAD(+)] 2, CHLOROPLASTIC"/>
    <property type="match status" value="1"/>
</dbReference>
<dbReference type="Pfam" id="PF07479">
    <property type="entry name" value="NAD_Gly3P_dh_C"/>
    <property type="match status" value="1"/>
</dbReference>
<dbReference type="Pfam" id="PF01210">
    <property type="entry name" value="NAD_Gly3P_dh_N"/>
    <property type="match status" value="1"/>
</dbReference>
<dbReference type="PIRSF" id="PIRSF000114">
    <property type="entry name" value="Glycerol-3-P_dh"/>
    <property type="match status" value="1"/>
</dbReference>
<dbReference type="PRINTS" id="PR00077">
    <property type="entry name" value="GPDHDRGNASE"/>
</dbReference>
<dbReference type="SUPFAM" id="SSF48179">
    <property type="entry name" value="6-phosphogluconate dehydrogenase C-terminal domain-like"/>
    <property type="match status" value="1"/>
</dbReference>
<dbReference type="SUPFAM" id="SSF51735">
    <property type="entry name" value="NAD(P)-binding Rossmann-fold domains"/>
    <property type="match status" value="1"/>
</dbReference>
<dbReference type="PROSITE" id="PS00957">
    <property type="entry name" value="NAD_G3PDH"/>
    <property type="match status" value="1"/>
</dbReference>
<protein>
    <recommendedName>
        <fullName evidence="1">Glycerol-3-phosphate dehydrogenase [NAD(P)+]</fullName>
        <ecNumber evidence="1">1.1.1.94</ecNumber>
    </recommendedName>
    <alternativeName>
        <fullName evidence="1">NAD(P)(+)-dependent glycerol-3-phosphate dehydrogenase</fullName>
    </alternativeName>
    <alternativeName>
        <fullName evidence="1">NAD(P)H-dependent dihydroxyacetone-phosphate reductase</fullName>
    </alternativeName>
</protein>
<comment type="function">
    <text evidence="1">Catalyzes the reduction of the glycolytic intermediate dihydroxyacetone phosphate (DHAP) to sn-glycerol 3-phosphate (G3P), the key precursor for phospholipid synthesis.</text>
</comment>
<comment type="catalytic activity">
    <reaction evidence="1">
        <text>sn-glycerol 3-phosphate + NAD(+) = dihydroxyacetone phosphate + NADH + H(+)</text>
        <dbReference type="Rhea" id="RHEA:11092"/>
        <dbReference type="ChEBI" id="CHEBI:15378"/>
        <dbReference type="ChEBI" id="CHEBI:57540"/>
        <dbReference type="ChEBI" id="CHEBI:57597"/>
        <dbReference type="ChEBI" id="CHEBI:57642"/>
        <dbReference type="ChEBI" id="CHEBI:57945"/>
        <dbReference type="EC" id="1.1.1.94"/>
    </reaction>
    <physiologicalReaction direction="right-to-left" evidence="1">
        <dbReference type="Rhea" id="RHEA:11094"/>
    </physiologicalReaction>
</comment>
<comment type="catalytic activity">
    <reaction evidence="1">
        <text>sn-glycerol 3-phosphate + NADP(+) = dihydroxyacetone phosphate + NADPH + H(+)</text>
        <dbReference type="Rhea" id="RHEA:11096"/>
        <dbReference type="ChEBI" id="CHEBI:15378"/>
        <dbReference type="ChEBI" id="CHEBI:57597"/>
        <dbReference type="ChEBI" id="CHEBI:57642"/>
        <dbReference type="ChEBI" id="CHEBI:57783"/>
        <dbReference type="ChEBI" id="CHEBI:58349"/>
        <dbReference type="EC" id="1.1.1.94"/>
    </reaction>
    <physiologicalReaction direction="right-to-left" evidence="1">
        <dbReference type="Rhea" id="RHEA:11098"/>
    </physiologicalReaction>
</comment>
<comment type="pathway">
    <text evidence="1">Membrane lipid metabolism; glycerophospholipid metabolism.</text>
</comment>
<comment type="subcellular location">
    <subcellularLocation>
        <location evidence="1">Cytoplasm</location>
    </subcellularLocation>
</comment>
<comment type="similarity">
    <text evidence="1">Belongs to the NAD-dependent glycerol-3-phosphate dehydrogenase family.</text>
</comment>
<feature type="chain" id="PRO_1000190140" description="Glycerol-3-phosphate dehydrogenase [NAD(P)+]">
    <location>
        <begin position="1"/>
        <end position="339"/>
    </location>
</feature>
<feature type="active site" description="Proton acceptor" evidence="1">
    <location>
        <position position="195"/>
    </location>
</feature>
<feature type="binding site" evidence="1">
    <location>
        <position position="15"/>
    </location>
    <ligand>
        <name>NADPH</name>
        <dbReference type="ChEBI" id="CHEBI:57783"/>
    </ligand>
</feature>
<feature type="binding site" evidence="1">
    <location>
        <position position="16"/>
    </location>
    <ligand>
        <name>NADPH</name>
        <dbReference type="ChEBI" id="CHEBI:57783"/>
    </ligand>
</feature>
<feature type="binding site" evidence="1">
    <location>
        <position position="36"/>
    </location>
    <ligand>
        <name>NADPH</name>
        <dbReference type="ChEBI" id="CHEBI:57783"/>
    </ligand>
</feature>
<feature type="binding site" evidence="1">
    <location>
        <position position="110"/>
    </location>
    <ligand>
        <name>NADPH</name>
        <dbReference type="ChEBI" id="CHEBI:57783"/>
    </ligand>
</feature>
<feature type="binding site" evidence="1">
    <location>
        <position position="110"/>
    </location>
    <ligand>
        <name>sn-glycerol 3-phosphate</name>
        <dbReference type="ChEBI" id="CHEBI:57597"/>
    </ligand>
</feature>
<feature type="binding site" evidence="1">
    <location>
        <position position="139"/>
    </location>
    <ligand>
        <name>sn-glycerol 3-phosphate</name>
        <dbReference type="ChEBI" id="CHEBI:57597"/>
    </ligand>
</feature>
<feature type="binding site" evidence="1">
    <location>
        <position position="141"/>
    </location>
    <ligand>
        <name>sn-glycerol 3-phosphate</name>
        <dbReference type="ChEBI" id="CHEBI:57597"/>
    </ligand>
</feature>
<feature type="binding site" evidence="1">
    <location>
        <position position="143"/>
    </location>
    <ligand>
        <name>NADPH</name>
        <dbReference type="ChEBI" id="CHEBI:57783"/>
    </ligand>
</feature>
<feature type="binding site" evidence="1">
    <location>
        <position position="195"/>
    </location>
    <ligand>
        <name>sn-glycerol 3-phosphate</name>
        <dbReference type="ChEBI" id="CHEBI:57597"/>
    </ligand>
</feature>
<feature type="binding site" evidence="1">
    <location>
        <position position="248"/>
    </location>
    <ligand>
        <name>sn-glycerol 3-phosphate</name>
        <dbReference type="ChEBI" id="CHEBI:57597"/>
    </ligand>
</feature>
<feature type="binding site" evidence="1">
    <location>
        <position position="258"/>
    </location>
    <ligand>
        <name>sn-glycerol 3-phosphate</name>
        <dbReference type="ChEBI" id="CHEBI:57597"/>
    </ligand>
</feature>
<feature type="binding site" evidence="1">
    <location>
        <position position="259"/>
    </location>
    <ligand>
        <name>NADPH</name>
        <dbReference type="ChEBI" id="CHEBI:57783"/>
    </ligand>
</feature>
<feature type="binding site" evidence="1">
    <location>
        <position position="259"/>
    </location>
    <ligand>
        <name>sn-glycerol 3-phosphate</name>
        <dbReference type="ChEBI" id="CHEBI:57597"/>
    </ligand>
</feature>
<feature type="binding site" evidence="1">
    <location>
        <position position="260"/>
    </location>
    <ligand>
        <name>sn-glycerol 3-phosphate</name>
        <dbReference type="ChEBI" id="CHEBI:57597"/>
    </ligand>
</feature>
<feature type="binding site" evidence="1">
    <location>
        <position position="283"/>
    </location>
    <ligand>
        <name>NADPH</name>
        <dbReference type="ChEBI" id="CHEBI:57783"/>
    </ligand>
</feature>
<feature type="binding site" evidence="1">
    <location>
        <position position="285"/>
    </location>
    <ligand>
        <name>NADPH</name>
        <dbReference type="ChEBI" id="CHEBI:57783"/>
    </ligand>
</feature>
<name>GPDA_ECODH</name>
<evidence type="ECO:0000255" key="1">
    <source>
        <dbReference type="HAMAP-Rule" id="MF_00394"/>
    </source>
</evidence>
<reference key="1">
    <citation type="journal article" date="2008" name="J. Bacteriol.">
        <title>The complete genome sequence of Escherichia coli DH10B: insights into the biology of a laboratory workhorse.</title>
        <authorList>
            <person name="Durfee T."/>
            <person name="Nelson R."/>
            <person name="Baldwin S."/>
            <person name="Plunkett G. III"/>
            <person name="Burland V."/>
            <person name="Mau B."/>
            <person name="Petrosino J.F."/>
            <person name="Qin X."/>
            <person name="Muzny D.M."/>
            <person name="Ayele M."/>
            <person name="Gibbs R.A."/>
            <person name="Csorgo B."/>
            <person name="Posfai G."/>
            <person name="Weinstock G.M."/>
            <person name="Blattner F.R."/>
        </authorList>
    </citation>
    <scope>NUCLEOTIDE SEQUENCE [LARGE SCALE GENOMIC DNA]</scope>
    <source>
        <strain>K12 / DH10B</strain>
    </source>
</reference>